<dbReference type="EC" id="5.6.1.7" evidence="1"/>
<dbReference type="EMBL" id="CP000482">
    <property type="protein sequence ID" value="ABL00402.1"/>
    <property type="molecule type" value="Genomic_DNA"/>
</dbReference>
<dbReference type="RefSeq" id="WP_011736643.1">
    <property type="nucleotide sequence ID" value="NC_008609.1"/>
</dbReference>
<dbReference type="SMR" id="A1AST1"/>
<dbReference type="STRING" id="338966.Ppro_2802"/>
<dbReference type="KEGG" id="ppd:Ppro_2802"/>
<dbReference type="eggNOG" id="COG0459">
    <property type="taxonomic scope" value="Bacteria"/>
</dbReference>
<dbReference type="HOGENOM" id="CLU_016503_3_0_7"/>
<dbReference type="OrthoDB" id="9766614at2"/>
<dbReference type="Proteomes" id="UP000006732">
    <property type="component" value="Chromosome"/>
</dbReference>
<dbReference type="GO" id="GO:0005737">
    <property type="term" value="C:cytoplasm"/>
    <property type="evidence" value="ECO:0007669"/>
    <property type="project" value="UniProtKB-SubCell"/>
</dbReference>
<dbReference type="GO" id="GO:0005524">
    <property type="term" value="F:ATP binding"/>
    <property type="evidence" value="ECO:0007669"/>
    <property type="project" value="UniProtKB-UniRule"/>
</dbReference>
<dbReference type="GO" id="GO:0140662">
    <property type="term" value="F:ATP-dependent protein folding chaperone"/>
    <property type="evidence" value="ECO:0007669"/>
    <property type="project" value="InterPro"/>
</dbReference>
<dbReference type="GO" id="GO:0016853">
    <property type="term" value="F:isomerase activity"/>
    <property type="evidence" value="ECO:0007669"/>
    <property type="project" value="UniProtKB-KW"/>
</dbReference>
<dbReference type="GO" id="GO:0051082">
    <property type="term" value="F:unfolded protein binding"/>
    <property type="evidence" value="ECO:0007669"/>
    <property type="project" value="UniProtKB-UniRule"/>
</dbReference>
<dbReference type="GO" id="GO:0042026">
    <property type="term" value="P:protein refolding"/>
    <property type="evidence" value="ECO:0007669"/>
    <property type="project" value="UniProtKB-UniRule"/>
</dbReference>
<dbReference type="CDD" id="cd03344">
    <property type="entry name" value="GroEL"/>
    <property type="match status" value="1"/>
</dbReference>
<dbReference type="FunFam" id="1.10.560.10:FF:000001">
    <property type="entry name" value="60 kDa chaperonin"/>
    <property type="match status" value="1"/>
</dbReference>
<dbReference type="FunFam" id="3.50.7.10:FF:000001">
    <property type="entry name" value="60 kDa chaperonin"/>
    <property type="match status" value="1"/>
</dbReference>
<dbReference type="Gene3D" id="3.50.7.10">
    <property type="entry name" value="GroEL"/>
    <property type="match status" value="1"/>
</dbReference>
<dbReference type="Gene3D" id="1.10.560.10">
    <property type="entry name" value="GroEL-like equatorial domain"/>
    <property type="match status" value="1"/>
</dbReference>
<dbReference type="Gene3D" id="3.30.260.10">
    <property type="entry name" value="TCP-1-like chaperonin intermediate domain"/>
    <property type="match status" value="1"/>
</dbReference>
<dbReference type="HAMAP" id="MF_00600">
    <property type="entry name" value="CH60"/>
    <property type="match status" value="1"/>
</dbReference>
<dbReference type="InterPro" id="IPR018370">
    <property type="entry name" value="Chaperonin_Cpn60_CS"/>
</dbReference>
<dbReference type="InterPro" id="IPR001844">
    <property type="entry name" value="Cpn60/GroEL"/>
</dbReference>
<dbReference type="InterPro" id="IPR002423">
    <property type="entry name" value="Cpn60/GroEL/TCP-1"/>
</dbReference>
<dbReference type="InterPro" id="IPR027409">
    <property type="entry name" value="GroEL-like_apical_dom_sf"/>
</dbReference>
<dbReference type="InterPro" id="IPR027413">
    <property type="entry name" value="GROEL-like_equatorial_sf"/>
</dbReference>
<dbReference type="InterPro" id="IPR027410">
    <property type="entry name" value="TCP-1-like_intermed_sf"/>
</dbReference>
<dbReference type="NCBIfam" id="TIGR02348">
    <property type="entry name" value="GroEL"/>
    <property type="match status" value="1"/>
</dbReference>
<dbReference type="NCBIfam" id="NF000592">
    <property type="entry name" value="PRK00013.1"/>
    <property type="match status" value="1"/>
</dbReference>
<dbReference type="NCBIfam" id="NF009487">
    <property type="entry name" value="PRK12849.1"/>
    <property type="match status" value="1"/>
</dbReference>
<dbReference type="NCBIfam" id="NF009488">
    <property type="entry name" value="PRK12850.1"/>
    <property type="match status" value="1"/>
</dbReference>
<dbReference type="NCBIfam" id="NF009489">
    <property type="entry name" value="PRK12851.1"/>
    <property type="match status" value="1"/>
</dbReference>
<dbReference type="PANTHER" id="PTHR45633">
    <property type="entry name" value="60 KDA HEAT SHOCK PROTEIN, MITOCHONDRIAL"/>
    <property type="match status" value="1"/>
</dbReference>
<dbReference type="Pfam" id="PF00118">
    <property type="entry name" value="Cpn60_TCP1"/>
    <property type="match status" value="1"/>
</dbReference>
<dbReference type="PRINTS" id="PR00298">
    <property type="entry name" value="CHAPERONIN60"/>
</dbReference>
<dbReference type="SUPFAM" id="SSF52029">
    <property type="entry name" value="GroEL apical domain-like"/>
    <property type="match status" value="1"/>
</dbReference>
<dbReference type="SUPFAM" id="SSF48592">
    <property type="entry name" value="GroEL equatorial domain-like"/>
    <property type="match status" value="1"/>
</dbReference>
<dbReference type="SUPFAM" id="SSF54849">
    <property type="entry name" value="GroEL-intermediate domain like"/>
    <property type="match status" value="1"/>
</dbReference>
<dbReference type="PROSITE" id="PS00296">
    <property type="entry name" value="CHAPERONINS_CPN60"/>
    <property type="match status" value="1"/>
</dbReference>
<feature type="chain" id="PRO_1000025817" description="Chaperonin GroEL">
    <location>
        <begin position="1"/>
        <end position="554"/>
    </location>
</feature>
<feature type="binding site" evidence="1">
    <location>
        <begin position="30"/>
        <end position="33"/>
    </location>
    <ligand>
        <name>ATP</name>
        <dbReference type="ChEBI" id="CHEBI:30616"/>
    </ligand>
</feature>
<feature type="binding site" evidence="1">
    <location>
        <position position="51"/>
    </location>
    <ligand>
        <name>ATP</name>
        <dbReference type="ChEBI" id="CHEBI:30616"/>
    </ligand>
</feature>
<feature type="binding site" evidence="1">
    <location>
        <begin position="87"/>
        <end position="91"/>
    </location>
    <ligand>
        <name>ATP</name>
        <dbReference type="ChEBI" id="CHEBI:30616"/>
    </ligand>
</feature>
<feature type="binding site" evidence="1">
    <location>
        <position position="415"/>
    </location>
    <ligand>
        <name>ATP</name>
        <dbReference type="ChEBI" id="CHEBI:30616"/>
    </ligand>
</feature>
<feature type="binding site" evidence="1">
    <location>
        <begin position="478"/>
        <end position="480"/>
    </location>
    <ligand>
        <name>ATP</name>
        <dbReference type="ChEBI" id="CHEBI:30616"/>
    </ligand>
</feature>
<feature type="binding site" evidence="1">
    <location>
        <position position="494"/>
    </location>
    <ligand>
        <name>ATP</name>
        <dbReference type="ChEBI" id="CHEBI:30616"/>
    </ligand>
</feature>
<name>CH60_PELPD</name>
<comment type="function">
    <text evidence="1">Together with its co-chaperonin GroES, plays an essential role in assisting protein folding. The GroEL-GroES system forms a nano-cage that allows encapsulation of the non-native substrate proteins and provides a physical environment optimized to promote and accelerate protein folding.</text>
</comment>
<comment type="catalytic activity">
    <reaction evidence="1">
        <text>ATP + H2O + a folded polypeptide = ADP + phosphate + an unfolded polypeptide.</text>
        <dbReference type="EC" id="5.6.1.7"/>
    </reaction>
</comment>
<comment type="subunit">
    <text evidence="1">Forms a cylinder of 14 subunits composed of two heptameric rings stacked back-to-back. Interacts with the co-chaperonin GroES.</text>
</comment>
<comment type="subcellular location">
    <subcellularLocation>
        <location evidence="1">Cytoplasm</location>
    </subcellularLocation>
</comment>
<comment type="similarity">
    <text evidence="1">Belongs to the chaperonin (HSP60) family.</text>
</comment>
<organism>
    <name type="scientific">Pelobacter propionicus (strain DSM 2379 / NBRC 103807 / OttBd1)</name>
    <dbReference type="NCBI Taxonomy" id="338966"/>
    <lineage>
        <taxon>Bacteria</taxon>
        <taxon>Pseudomonadati</taxon>
        <taxon>Thermodesulfobacteriota</taxon>
        <taxon>Desulfuromonadia</taxon>
        <taxon>Desulfuromonadales</taxon>
        <taxon>Desulfuromonadaceae</taxon>
        <taxon>Pelobacter</taxon>
    </lineage>
</organism>
<gene>
    <name evidence="1" type="primary">groEL</name>
    <name evidence="1" type="synonym">groL</name>
    <name type="ordered locus">Ppro_2802</name>
</gene>
<keyword id="KW-0067">ATP-binding</keyword>
<keyword id="KW-0143">Chaperone</keyword>
<keyword id="KW-0963">Cytoplasm</keyword>
<keyword id="KW-0413">Isomerase</keyword>
<keyword id="KW-0547">Nucleotide-binding</keyword>
<keyword id="KW-1185">Reference proteome</keyword>
<proteinExistence type="inferred from homology"/>
<sequence length="554" mass="58845">MAAKIIKFDQEGRNAILKGVNILADTVKVTLGPKGRNVVIDKSFGAPLITKDGVTVAKEIELEDKFENMGAQLVKEVASKTSDVAGDGTTTATVLAQAIYRQGSKLVAAGHNPMEIKRGIDKAVETIVAELQKISKPIVDHKEIAQVGTISANNDKTIGDIIAEAMEKVGKEGVITVEEAKSMDTTLETVEGMQFDRGYLSPYFVTDPERMEAALENALILIHDKKISNMKDLLPILEQTAKSGRPLLIIAEDIEGEALATLVVNKLRGVLNVAAVKAPGFGDRRKAMLEDIATLTGGLVISEEVGHKLEQATMDMLGRAKRITIDKDNTTIIDGEGKEADIQGRVKQIRAQIEETTSDYDKEKLQERLAKLVGGVAVIKVGAATEVEMKEKKARVEDALHATRAAVDEGVVPGGGVAYIRTLSALDNLNLENEQQFGVTVVKLALEAPIRQIADNAGIDASIVVDKVRNGKDAFGYDAASDEYVDMLKAGIIDPTKVSRSALQNASSIAGLMLTTEALIAEKPREEGAMGGGMPGGMGGMGGMGGMGGMGGMM</sequence>
<protein>
    <recommendedName>
        <fullName evidence="1">Chaperonin GroEL</fullName>
        <ecNumber evidence="1">5.6.1.7</ecNumber>
    </recommendedName>
    <alternativeName>
        <fullName evidence="1">60 kDa chaperonin</fullName>
    </alternativeName>
    <alternativeName>
        <fullName evidence="1">Chaperonin-60</fullName>
        <shortName evidence="1">Cpn60</shortName>
    </alternativeName>
</protein>
<evidence type="ECO:0000255" key="1">
    <source>
        <dbReference type="HAMAP-Rule" id="MF_00600"/>
    </source>
</evidence>
<accession>A1AST1</accession>
<reference key="1">
    <citation type="submission" date="2006-10" db="EMBL/GenBank/DDBJ databases">
        <title>Complete sequence of chromosome of Pelobacter propionicus DSM 2379.</title>
        <authorList>
            <consortium name="US DOE Joint Genome Institute"/>
            <person name="Copeland A."/>
            <person name="Lucas S."/>
            <person name="Lapidus A."/>
            <person name="Barry K."/>
            <person name="Detter J.C."/>
            <person name="Glavina del Rio T."/>
            <person name="Hammon N."/>
            <person name="Israni S."/>
            <person name="Dalin E."/>
            <person name="Tice H."/>
            <person name="Pitluck S."/>
            <person name="Saunders E."/>
            <person name="Brettin T."/>
            <person name="Bruce D."/>
            <person name="Han C."/>
            <person name="Tapia R."/>
            <person name="Schmutz J."/>
            <person name="Larimer F."/>
            <person name="Land M."/>
            <person name="Hauser L."/>
            <person name="Kyrpides N."/>
            <person name="Kim E."/>
            <person name="Lovley D."/>
            <person name="Richardson P."/>
        </authorList>
    </citation>
    <scope>NUCLEOTIDE SEQUENCE [LARGE SCALE GENOMIC DNA]</scope>
    <source>
        <strain>DSM 2379 / NBRC 103807 / OttBd1</strain>
    </source>
</reference>